<organism>
    <name type="scientific">Shewanella loihica (strain ATCC BAA-1088 / PV-4)</name>
    <dbReference type="NCBI Taxonomy" id="323850"/>
    <lineage>
        <taxon>Bacteria</taxon>
        <taxon>Pseudomonadati</taxon>
        <taxon>Pseudomonadota</taxon>
        <taxon>Gammaproteobacteria</taxon>
        <taxon>Alteromonadales</taxon>
        <taxon>Shewanellaceae</taxon>
        <taxon>Shewanella</taxon>
    </lineage>
</organism>
<feature type="chain" id="PRO_1000055305" description="Large ribosomal subunit protein uL6">
    <location>
        <begin position="1"/>
        <end position="176"/>
    </location>
</feature>
<feature type="region of interest" description="Disordered" evidence="2">
    <location>
        <begin position="151"/>
        <end position="176"/>
    </location>
</feature>
<feature type="compositionally biased region" description="Basic and acidic residues" evidence="2">
    <location>
        <begin position="151"/>
        <end position="170"/>
    </location>
</feature>
<reference key="1">
    <citation type="submission" date="2007-03" db="EMBL/GenBank/DDBJ databases">
        <title>Complete sequence of Shewanella loihica PV-4.</title>
        <authorList>
            <consortium name="US DOE Joint Genome Institute"/>
            <person name="Copeland A."/>
            <person name="Lucas S."/>
            <person name="Lapidus A."/>
            <person name="Barry K."/>
            <person name="Detter J.C."/>
            <person name="Glavina del Rio T."/>
            <person name="Hammon N."/>
            <person name="Israni S."/>
            <person name="Dalin E."/>
            <person name="Tice H."/>
            <person name="Pitluck S."/>
            <person name="Chain P."/>
            <person name="Malfatti S."/>
            <person name="Shin M."/>
            <person name="Vergez L."/>
            <person name="Schmutz J."/>
            <person name="Larimer F."/>
            <person name="Land M."/>
            <person name="Hauser L."/>
            <person name="Kyrpides N."/>
            <person name="Mikhailova N."/>
            <person name="Romine M.F."/>
            <person name="Serres G."/>
            <person name="Fredrickson J."/>
            <person name="Tiedje J."/>
            <person name="Richardson P."/>
        </authorList>
    </citation>
    <scope>NUCLEOTIDE SEQUENCE [LARGE SCALE GENOMIC DNA]</scope>
    <source>
        <strain>ATCC BAA-1088 / PV-4</strain>
    </source>
</reference>
<dbReference type="EMBL" id="CP000606">
    <property type="protein sequence ID" value="ABO22045.1"/>
    <property type="molecule type" value="Genomic_DNA"/>
</dbReference>
<dbReference type="RefSeq" id="WP_011863981.1">
    <property type="nucleotide sequence ID" value="NC_009092.1"/>
</dbReference>
<dbReference type="SMR" id="A3Q997"/>
<dbReference type="STRING" id="323850.Shew_0173"/>
<dbReference type="KEGG" id="slo:Shew_0173"/>
<dbReference type="eggNOG" id="COG0097">
    <property type="taxonomic scope" value="Bacteria"/>
</dbReference>
<dbReference type="HOGENOM" id="CLU_065464_1_2_6"/>
<dbReference type="OrthoDB" id="9805007at2"/>
<dbReference type="Proteomes" id="UP000001558">
    <property type="component" value="Chromosome"/>
</dbReference>
<dbReference type="GO" id="GO:0022625">
    <property type="term" value="C:cytosolic large ribosomal subunit"/>
    <property type="evidence" value="ECO:0007669"/>
    <property type="project" value="TreeGrafter"/>
</dbReference>
<dbReference type="GO" id="GO:0019843">
    <property type="term" value="F:rRNA binding"/>
    <property type="evidence" value="ECO:0007669"/>
    <property type="project" value="UniProtKB-UniRule"/>
</dbReference>
<dbReference type="GO" id="GO:0003735">
    <property type="term" value="F:structural constituent of ribosome"/>
    <property type="evidence" value="ECO:0007669"/>
    <property type="project" value="InterPro"/>
</dbReference>
<dbReference type="GO" id="GO:0002181">
    <property type="term" value="P:cytoplasmic translation"/>
    <property type="evidence" value="ECO:0007669"/>
    <property type="project" value="TreeGrafter"/>
</dbReference>
<dbReference type="FunFam" id="3.90.930.12:FF:000001">
    <property type="entry name" value="50S ribosomal protein L6"/>
    <property type="match status" value="1"/>
</dbReference>
<dbReference type="FunFam" id="3.90.930.12:FF:000002">
    <property type="entry name" value="50S ribosomal protein L6"/>
    <property type="match status" value="1"/>
</dbReference>
<dbReference type="Gene3D" id="3.90.930.12">
    <property type="entry name" value="Ribosomal protein L6, alpha-beta domain"/>
    <property type="match status" value="2"/>
</dbReference>
<dbReference type="HAMAP" id="MF_01365_B">
    <property type="entry name" value="Ribosomal_uL6_B"/>
    <property type="match status" value="1"/>
</dbReference>
<dbReference type="InterPro" id="IPR000702">
    <property type="entry name" value="Ribosomal_uL6-like"/>
</dbReference>
<dbReference type="InterPro" id="IPR036789">
    <property type="entry name" value="Ribosomal_uL6-like_a/b-dom_sf"/>
</dbReference>
<dbReference type="InterPro" id="IPR020040">
    <property type="entry name" value="Ribosomal_uL6_a/b-dom"/>
</dbReference>
<dbReference type="InterPro" id="IPR019906">
    <property type="entry name" value="Ribosomal_uL6_bac-type"/>
</dbReference>
<dbReference type="InterPro" id="IPR002358">
    <property type="entry name" value="Ribosomal_uL6_CS"/>
</dbReference>
<dbReference type="NCBIfam" id="TIGR03654">
    <property type="entry name" value="L6_bact"/>
    <property type="match status" value="1"/>
</dbReference>
<dbReference type="PANTHER" id="PTHR11655">
    <property type="entry name" value="60S/50S RIBOSOMAL PROTEIN L6/L9"/>
    <property type="match status" value="1"/>
</dbReference>
<dbReference type="PANTHER" id="PTHR11655:SF14">
    <property type="entry name" value="LARGE RIBOSOMAL SUBUNIT PROTEIN UL6M"/>
    <property type="match status" value="1"/>
</dbReference>
<dbReference type="Pfam" id="PF00347">
    <property type="entry name" value="Ribosomal_L6"/>
    <property type="match status" value="2"/>
</dbReference>
<dbReference type="PIRSF" id="PIRSF002162">
    <property type="entry name" value="Ribosomal_L6"/>
    <property type="match status" value="1"/>
</dbReference>
<dbReference type="PRINTS" id="PR00059">
    <property type="entry name" value="RIBOSOMALL6"/>
</dbReference>
<dbReference type="SUPFAM" id="SSF56053">
    <property type="entry name" value="Ribosomal protein L6"/>
    <property type="match status" value="2"/>
</dbReference>
<dbReference type="PROSITE" id="PS00525">
    <property type="entry name" value="RIBOSOMAL_L6_1"/>
    <property type="match status" value="1"/>
</dbReference>
<accession>A3Q997</accession>
<name>RL6_SHELP</name>
<comment type="function">
    <text evidence="1">This protein binds to the 23S rRNA, and is important in its secondary structure. It is located near the subunit interface in the base of the L7/L12 stalk, and near the tRNA binding site of the peptidyltransferase center.</text>
</comment>
<comment type="subunit">
    <text evidence="1">Part of the 50S ribosomal subunit.</text>
</comment>
<comment type="similarity">
    <text evidence="1">Belongs to the universal ribosomal protein uL6 family.</text>
</comment>
<gene>
    <name evidence="1" type="primary">rplF</name>
    <name type="ordered locus">Shew_0173</name>
</gene>
<proteinExistence type="inferred from homology"/>
<protein>
    <recommendedName>
        <fullName evidence="1">Large ribosomal subunit protein uL6</fullName>
    </recommendedName>
    <alternativeName>
        <fullName evidence="3">50S ribosomal protein L6</fullName>
    </alternativeName>
</protein>
<evidence type="ECO:0000255" key="1">
    <source>
        <dbReference type="HAMAP-Rule" id="MF_01365"/>
    </source>
</evidence>
<evidence type="ECO:0000256" key="2">
    <source>
        <dbReference type="SAM" id="MobiDB-lite"/>
    </source>
</evidence>
<evidence type="ECO:0000305" key="3"/>
<sequence length="176" mass="18674">MSRVAKAPVAIPAGVEVTLNEQTITVKGAKGSLTRVINADVSVVVENNEIKCSPAEGVTSAAQAGTARALINNMVVGVNEGFERKLTLVGVGYRAKIAGNGIDLTLGFSHPLVHQLPDGVTAECPSQTEIVLKSTDKQLVGQVAAEIRGYRPPEPYKGKGVRYADEQVRRKEAKKK</sequence>
<keyword id="KW-1185">Reference proteome</keyword>
<keyword id="KW-0687">Ribonucleoprotein</keyword>
<keyword id="KW-0689">Ribosomal protein</keyword>
<keyword id="KW-0694">RNA-binding</keyword>
<keyword id="KW-0699">rRNA-binding</keyword>